<evidence type="ECO:0000255" key="1">
    <source>
        <dbReference type="HAMAP-Rule" id="MF_00110"/>
    </source>
</evidence>
<comment type="function">
    <text evidence="1">Catalyzes the conversion of 3-deoxy-D-arabino-heptulosonate 7-phosphate (DAHP) to dehydroquinate (DHQ).</text>
</comment>
<comment type="catalytic activity">
    <reaction evidence="1">
        <text>7-phospho-2-dehydro-3-deoxy-D-arabino-heptonate = 3-dehydroquinate + phosphate</text>
        <dbReference type="Rhea" id="RHEA:21968"/>
        <dbReference type="ChEBI" id="CHEBI:32364"/>
        <dbReference type="ChEBI" id="CHEBI:43474"/>
        <dbReference type="ChEBI" id="CHEBI:58394"/>
        <dbReference type="EC" id="4.2.3.4"/>
    </reaction>
</comment>
<comment type="cofactor">
    <cofactor evidence="1">
        <name>Co(2+)</name>
        <dbReference type="ChEBI" id="CHEBI:48828"/>
    </cofactor>
    <cofactor evidence="1">
        <name>Zn(2+)</name>
        <dbReference type="ChEBI" id="CHEBI:29105"/>
    </cofactor>
    <text evidence="1">Binds 1 divalent metal cation per subunit. Can use either Co(2+) or Zn(2+).</text>
</comment>
<comment type="cofactor">
    <cofactor evidence="1">
        <name>NAD(+)</name>
        <dbReference type="ChEBI" id="CHEBI:57540"/>
    </cofactor>
</comment>
<comment type="pathway">
    <text evidence="1">Metabolic intermediate biosynthesis; chorismate biosynthesis; chorismate from D-erythrose 4-phosphate and phosphoenolpyruvate: step 2/7.</text>
</comment>
<comment type="subcellular location">
    <subcellularLocation>
        <location evidence="1">Cytoplasm</location>
    </subcellularLocation>
</comment>
<comment type="similarity">
    <text evidence="1">Belongs to the sugar phosphate cyclases superfamily. Dehydroquinate synthase family.</text>
</comment>
<keyword id="KW-0028">Amino-acid biosynthesis</keyword>
<keyword id="KW-0057">Aromatic amino acid biosynthesis</keyword>
<keyword id="KW-0170">Cobalt</keyword>
<keyword id="KW-0963">Cytoplasm</keyword>
<keyword id="KW-0456">Lyase</keyword>
<keyword id="KW-0479">Metal-binding</keyword>
<keyword id="KW-0520">NAD</keyword>
<keyword id="KW-0547">Nucleotide-binding</keyword>
<keyword id="KW-0862">Zinc</keyword>
<organism>
    <name type="scientific">Prochlorococcus marinus (strain AS9601)</name>
    <dbReference type="NCBI Taxonomy" id="146891"/>
    <lineage>
        <taxon>Bacteria</taxon>
        <taxon>Bacillati</taxon>
        <taxon>Cyanobacteriota</taxon>
        <taxon>Cyanophyceae</taxon>
        <taxon>Synechococcales</taxon>
        <taxon>Prochlorococcaceae</taxon>
        <taxon>Prochlorococcus</taxon>
    </lineage>
</organism>
<protein>
    <recommendedName>
        <fullName evidence="1">3-dehydroquinate synthase</fullName>
        <shortName evidence="1">DHQS</shortName>
        <ecNumber evidence="1">4.2.3.4</ecNumber>
    </recommendedName>
</protein>
<gene>
    <name evidence="1" type="primary">aroB</name>
    <name type="ordered locus">A9601_07371</name>
</gene>
<sequence>MNKRKILVPLGDKSYEVTLEAGILNNISEELLKIGITKKRKILVISNEEISNLYGEKFLNNLKDNKFQAKMFLIKAGESYKNLKTLSEIYDVAFEFGLDRNSIIIALGGGIVGDVSGFAAATWLRGIEYIQIPTTLLSMVDSSVGGKTGVNHPKGKNLIGAFNQPKAVFIDPETLKSLPKREFSAGMAEVIKYGVIRDKELFEYLEIEKNKNELINLKNEYLIKIINSSIKTKSNVVSQDEHENGVRAILNYGHSFGHVIENLCGYGKFLHGEAISIGMNIAGKIAIEKGLWSKEELERQRILLESYDLPTEIPKINKEDVLTILMGDKKVRDGKMRFILPKEIGAVDIYDDVEDSLFLKFFS</sequence>
<reference key="1">
    <citation type="journal article" date="2007" name="PLoS Genet.">
        <title>Patterns and implications of gene gain and loss in the evolution of Prochlorococcus.</title>
        <authorList>
            <person name="Kettler G.C."/>
            <person name="Martiny A.C."/>
            <person name="Huang K."/>
            <person name="Zucker J."/>
            <person name="Coleman M.L."/>
            <person name="Rodrigue S."/>
            <person name="Chen F."/>
            <person name="Lapidus A."/>
            <person name="Ferriera S."/>
            <person name="Johnson J."/>
            <person name="Steglich C."/>
            <person name="Church G.M."/>
            <person name="Richardson P."/>
            <person name="Chisholm S.W."/>
        </authorList>
    </citation>
    <scope>NUCLEOTIDE SEQUENCE [LARGE SCALE GENOMIC DNA]</scope>
    <source>
        <strain>AS9601</strain>
    </source>
</reference>
<dbReference type="EC" id="4.2.3.4" evidence="1"/>
<dbReference type="EMBL" id="CP000551">
    <property type="protein sequence ID" value="ABM70023.1"/>
    <property type="molecule type" value="Genomic_DNA"/>
</dbReference>
<dbReference type="RefSeq" id="WP_011818185.1">
    <property type="nucleotide sequence ID" value="NC_008816.1"/>
</dbReference>
<dbReference type="SMR" id="A2BQG2"/>
<dbReference type="STRING" id="146891.A9601_07371"/>
<dbReference type="KEGG" id="pmb:A9601_07371"/>
<dbReference type="eggNOG" id="COG0337">
    <property type="taxonomic scope" value="Bacteria"/>
</dbReference>
<dbReference type="HOGENOM" id="CLU_001201_0_2_3"/>
<dbReference type="OrthoDB" id="9806583at2"/>
<dbReference type="UniPathway" id="UPA00053">
    <property type="reaction ID" value="UER00085"/>
</dbReference>
<dbReference type="Proteomes" id="UP000002590">
    <property type="component" value="Chromosome"/>
</dbReference>
<dbReference type="GO" id="GO:0005737">
    <property type="term" value="C:cytoplasm"/>
    <property type="evidence" value="ECO:0007669"/>
    <property type="project" value="UniProtKB-SubCell"/>
</dbReference>
<dbReference type="GO" id="GO:0003856">
    <property type="term" value="F:3-dehydroquinate synthase activity"/>
    <property type="evidence" value="ECO:0007669"/>
    <property type="project" value="UniProtKB-UniRule"/>
</dbReference>
<dbReference type="GO" id="GO:0046872">
    <property type="term" value="F:metal ion binding"/>
    <property type="evidence" value="ECO:0007669"/>
    <property type="project" value="UniProtKB-KW"/>
</dbReference>
<dbReference type="GO" id="GO:0000166">
    <property type="term" value="F:nucleotide binding"/>
    <property type="evidence" value="ECO:0007669"/>
    <property type="project" value="UniProtKB-KW"/>
</dbReference>
<dbReference type="GO" id="GO:0008652">
    <property type="term" value="P:amino acid biosynthetic process"/>
    <property type="evidence" value="ECO:0007669"/>
    <property type="project" value="UniProtKB-KW"/>
</dbReference>
<dbReference type="GO" id="GO:0009073">
    <property type="term" value="P:aromatic amino acid family biosynthetic process"/>
    <property type="evidence" value="ECO:0007669"/>
    <property type="project" value="UniProtKB-KW"/>
</dbReference>
<dbReference type="GO" id="GO:0009423">
    <property type="term" value="P:chorismate biosynthetic process"/>
    <property type="evidence" value="ECO:0007669"/>
    <property type="project" value="UniProtKB-UniRule"/>
</dbReference>
<dbReference type="CDD" id="cd08195">
    <property type="entry name" value="DHQS"/>
    <property type="match status" value="1"/>
</dbReference>
<dbReference type="FunFam" id="3.40.50.1970:FF:000001">
    <property type="entry name" value="3-dehydroquinate synthase"/>
    <property type="match status" value="1"/>
</dbReference>
<dbReference type="Gene3D" id="3.40.50.1970">
    <property type="match status" value="1"/>
</dbReference>
<dbReference type="Gene3D" id="1.20.1090.10">
    <property type="entry name" value="Dehydroquinate synthase-like - alpha domain"/>
    <property type="match status" value="1"/>
</dbReference>
<dbReference type="HAMAP" id="MF_00110">
    <property type="entry name" value="DHQ_synthase"/>
    <property type="match status" value="1"/>
</dbReference>
<dbReference type="InterPro" id="IPR050071">
    <property type="entry name" value="Dehydroquinate_synthase"/>
</dbReference>
<dbReference type="InterPro" id="IPR016037">
    <property type="entry name" value="DHQ_synth_AroB"/>
</dbReference>
<dbReference type="InterPro" id="IPR030963">
    <property type="entry name" value="DHQ_synth_fam"/>
</dbReference>
<dbReference type="InterPro" id="IPR030960">
    <property type="entry name" value="DHQS/DOIS_N"/>
</dbReference>
<dbReference type="InterPro" id="IPR056179">
    <property type="entry name" value="DHQS_C"/>
</dbReference>
<dbReference type="NCBIfam" id="TIGR01357">
    <property type="entry name" value="aroB"/>
    <property type="match status" value="1"/>
</dbReference>
<dbReference type="PANTHER" id="PTHR43622">
    <property type="entry name" value="3-DEHYDROQUINATE SYNTHASE"/>
    <property type="match status" value="1"/>
</dbReference>
<dbReference type="PANTHER" id="PTHR43622:SF7">
    <property type="entry name" value="3-DEHYDROQUINATE SYNTHASE, CHLOROPLASTIC"/>
    <property type="match status" value="1"/>
</dbReference>
<dbReference type="Pfam" id="PF01761">
    <property type="entry name" value="DHQ_synthase"/>
    <property type="match status" value="1"/>
</dbReference>
<dbReference type="Pfam" id="PF24621">
    <property type="entry name" value="DHQS_C"/>
    <property type="match status" value="1"/>
</dbReference>
<dbReference type="PIRSF" id="PIRSF001455">
    <property type="entry name" value="DHQ_synth"/>
    <property type="match status" value="1"/>
</dbReference>
<dbReference type="SUPFAM" id="SSF56796">
    <property type="entry name" value="Dehydroquinate synthase-like"/>
    <property type="match status" value="1"/>
</dbReference>
<accession>A2BQG2</accession>
<proteinExistence type="inferred from homology"/>
<name>AROB_PROMS</name>
<feature type="chain" id="PRO_1000094567" description="3-dehydroquinate synthase">
    <location>
        <begin position="1"/>
        <end position="363"/>
    </location>
</feature>
<feature type="binding site" evidence="1">
    <location>
        <begin position="134"/>
        <end position="135"/>
    </location>
    <ligand>
        <name>NAD(+)</name>
        <dbReference type="ChEBI" id="CHEBI:57540"/>
    </ligand>
</feature>
<feature type="binding site" evidence="1">
    <location>
        <position position="147"/>
    </location>
    <ligand>
        <name>NAD(+)</name>
        <dbReference type="ChEBI" id="CHEBI:57540"/>
    </ligand>
</feature>
<feature type="binding site" evidence="1">
    <location>
        <position position="156"/>
    </location>
    <ligand>
        <name>NAD(+)</name>
        <dbReference type="ChEBI" id="CHEBI:57540"/>
    </ligand>
</feature>
<feature type="binding site" evidence="1">
    <location>
        <position position="189"/>
    </location>
    <ligand>
        <name>Zn(2+)</name>
        <dbReference type="ChEBI" id="CHEBI:29105"/>
    </ligand>
</feature>
<feature type="binding site" evidence="1">
    <location>
        <position position="254"/>
    </location>
    <ligand>
        <name>Zn(2+)</name>
        <dbReference type="ChEBI" id="CHEBI:29105"/>
    </ligand>
</feature>
<feature type="binding site" evidence="1">
    <location>
        <position position="271"/>
    </location>
    <ligand>
        <name>Zn(2+)</name>
        <dbReference type="ChEBI" id="CHEBI:29105"/>
    </ligand>
</feature>